<evidence type="ECO:0000255" key="1">
    <source>
        <dbReference type="HAMAP-Rule" id="MF_00018"/>
    </source>
</evidence>
<evidence type="ECO:0000255" key="2">
    <source>
        <dbReference type="PROSITE-ProRule" id="PRU01182"/>
    </source>
</evidence>
<evidence type="ECO:0000305" key="3"/>
<keyword id="KW-0378">Hydrolase</keyword>
<keyword id="KW-0479">Metal-binding</keyword>
<keyword id="KW-0482">Metalloprotease</keyword>
<keyword id="KW-0645">Protease</keyword>
<keyword id="KW-0862">Zinc</keyword>
<reference key="1">
    <citation type="journal article" date="2006" name="BMC Genomics">
        <title>Complete genome sequence of Shigella flexneri 5b and comparison with Shigella flexneri 2a.</title>
        <authorList>
            <person name="Nie H."/>
            <person name="Yang F."/>
            <person name="Zhang X."/>
            <person name="Yang J."/>
            <person name="Chen L."/>
            <person name="Wang J."/>
            <person name="Xiong Z."/>
            <person name="Peng J."/>
            <person name="Sun L."/>
            <person name="Dong J."/>
            <person name="Xue Y."/>
            <person name="Xu X."/>
            <person name="Chen S."/>
            <person name="Yao Z."/>
            <person name="Shen Y."/>
            <person name="Jin Q."/>
        </authorList>
    </citation>
    <scope>NUCLEOTIDE SEQUENCE [LARGE SCALE GENOMIC DNA]</scope>
    <source>
        <strain>8401</strain>
    </source>
</reference>
<proteinExistence type="inferred from homology"/>
<name>YICR_SHIF8</name>
<protein>
    <recommendedName>
        <fullName evidence="1">UPF0758 protein YicR</fullName>
    </recommendedName>
</protein>
<comment type="similarity">
    <text evidence="1">Belongs to the UPF0758 family. YicR subfamily.</text>
</comment>
<comment type="sequence caution" evidence="3">
    <conflict type="erroneous initiation">
        <sequence resource="EMBL-CDS" id="ABF05900"/>
    </conflict>
</comment>
<dbReference type="EMBL" id="CP000266">
    <property type="protein sequence ID" value="ABF05900.1"/>
    <property type="status" value="ALT_INIT"/>
    <property type="molecule type" value="Genomic_DNA"/>
</dbReference>
<dbReference type="SMR" id="Q0SYG5"/>
<dbReference type="KEGG" id="sfv:SFV_3892"/>
<dbReference type="HOGENOM" id="CLU_073529_0_1_6"/>
<dbReference type="Proteomes" id="UP000000659">
    <property type="component" value="Chromosome"/>
</dbReference>
<dbReference type="GO" id="GO:0046872">
    <property type="term" value="F:metal ion binding"/>
    <property type="evidence" value="ECO:0007669"/>
    <property type="project" value="UniProtKB-KW"/>
</dbReference>
<dbReference type="GO" id="GO:0008237">
    <property type="term" value="F:metallopeptidase activity"/>
    <property type="evidence" value="ECO:0007669"/>
    <property type="project" value="UniProtKB-KW"/>
</dbReference>
<dbReference type="GO" id="GO:0006508">
    <property type="term" value="P:proteolysis"/>
    <property type="evidence" value="ECO:0007669"/>
    <property type="project" value="UniProtKB-KW"/>
</dbReference>
<dbReference type="CDD" id="cd08071">
    <property type="entry name" value="MPN_DUF2466"/>
    <property type="match status" value="1"/>
</dbReference>
<dbReference type="Gene3D" id="3.40.140.10">
    <property type="entry name" value="Cytidine Deaminase, domain 2"/>
    <property type="match status" value="1"/>
</dbReference>
<dbReference type="HAMAP" id="MF_00018">
    <property type="entry name" value="UPF0758_YicR"/>
    <property type="match status" value="1"/>
</dbReference>
<dbReference type="InterPro" id="IPR037518">
    <property type="entry name" value="MPN"/>
</dbReference>
<dbReference type="InterPro" id="IPR025657">
    <property type="entry name" value="RadC_JAB"/>
</dbReference>
<dbReference type="InterPro" id="IPR010994">
    <property type="entry name" value="RuvA_2-like"/>
</dbReference>
<dbReference type="InterPro" id="IPR001405">
    <property type="entry name" value="UPF0758"/>
</dbReference>
<dbReference type="InterPro" id="IPR020891">
    <property type="entry name" value="UPF0758_CS"/>
</dbReference>
<dbReference type="InterPro" id="IPR046778">
    <property type="entry name" value="UPF0758_N"/>
</dbReference>
<dbReference type="InterPro" id="IPR022820">
    <property type="entry name" value="UPF0758_YicR"/>
</dbReference>
<dbReference type="NCBIfam" id="NF000642">
    <property type="entry name" value="PRK00024.1"/>
    <property type="match status" value="1"/>
</dbReference>
<dbReference type="NCBIfam" id="TIGR00608">
    <property type="entry name" value="radc"/>
    <property type="match status" value="1"/>
</dbReference>
<dbReference type="PANTHER" id="PTHR30471">
    <property type="entry name" value="DNA REPAIR PROTEIN RADC"/>
    <property type="match status" value="1"/>
</dbReference>
<dbReference type="PANTHER" id="PTHR30471:SF3">
    <property type="entry name" value="UPF0758 PROTEIN YEES-RELATED"/>
    <property type="match status" value="1"/>
</dbReference>
<dbReference type="Pfam" id="PF04002">
    <property type="entry name" value="RadC"/>
    <property type="match status" value="1"/>
</dbReference>
<dbReference type="Pfam" id="PF20582">
    <property type="entry name" value="UPF0758_N"/>
    <property type="match status" value="1"/>
</dbReference>
<dbReference type="SUPFAM" id="SSF47781">
    <property type="entry name" value="RuvA domain 2-like"/>
    <property type="match status" value="1"/>
</dbReference>
<dbReference type="PROSITE" id="PS50249">
    <property type="entry name" value="MPN"/>
    <property type="match status" value="1"/>
</dbReference>
<dbReference type="PROSITE" id="PS01302">
    <property type="entry name" value="UPF0758"/>
    <property type="match status" value="1"/>
</dbReference>
<gene>
    <name evidence="1" type="primary">yicR</name>
    <name type="ordered locus">SFV_3892</name>
</gene>
<feature type="chain" id="PRO_0000322705" description="UPF0758 protein YicR">
    <location>
        <begin position="1"/>
        <end position="222"/>
    </location>
</feature>
<feature type="domain" description="MPN" evidence="2">
    <location>
        <begin position="100"/>
        <end position="222"/>
    </location>
</feature>
<feature type="short sequence motif" description="JAMM motif" evidence="2">
    <location>
        <begin position="171"/>
        <end position="184"/>
    </location>
</feature>
<feature type="binding site" evidence="2">
    <location>
        <position position="171"/>
    </location>
    <ligand>
        <name>Zn(2+)</name>
        <dbReference type="ChEBI" id="CHEBI:29105"/>
        <note>catalytic</note>
    </ligand>
</feature>
<feature type="binding site" evidence="2">
    <location>
        <position position="173"/>
    </location>
    <ligand>
        <name>Zn(2+)</name>
        <dbReference type="ChEBI" id="CHEBI:29105"/>
        <note>catalytic</note>
    </ligand>
</feature>
<feature type="binding site" evidence="2">
    <location>
        <position position="184"/>
    </location>
    <ligand>
        <name>Zn(2+)</name>
        <dbReference type="ChEBI" id="CHEBI:29105"/>
        <note>catalytic</note>
    </ligand>
</feature>
<accession>Q0SYG5</accession>
<sequence>MKNNAQLLMPREKMLKFGISALTDVELLALFLRTGTRGKDVLTLAKEMLENFGSLYGLLTSEYEQFSGVHGIGVAKFAQLKGIAELARRYYNVRMREESPLLSPEMTREFLQSQLTGEEREIFMVIFLDSQHRVITHSRLFSGTLNHVEVHPREIIREAIKINASALILAHNHPSGCAEPSKADKLITERIIKSCQFMDLRVLDHIVIGRGEYVSFAERGWI</sequence>
<organism>
    <name type="scientific">Shigella flexneri serotype 5b (strain 8401)</name>
    <dbReference type="NCBI Taxonomy" id="373384"/>
    <lineage>
        <taxon>Bacteria</taxon>
        <taxon>Pseudomonadati</taxon>
        <taxon>Pseudomonadota</taxon>
        <taxon>Gammaproteobacteria</taxon>
        <taxon>Enterobacterales</taxon>
        <taxon>Enterobacteriaceae</taxon>
        <taxon>Shigella</taxon>
    </lineage>
</organism>